<proteinExistence type="inferred from homology"/>
<reference key="1">
    <citation type="submission" date="2008-05" db="EMBL/GenBank/DDBJ databases">
        <title>Complete sequence of chromosome of Geobacter lovleyi SZ.</title>
        <authorList>
            <consortium name="US DOE Joint Genome Institute"/>
            <person name="Lucas S."/>
            <person name="Copeland A."/>
            <person name="Lapidus A."/>
            <person name="Glavina del Rio T."/>
            <person name="Dalin E."/>
            <person name="Tice H."/>
            <person name="Bruce D."/>
            <person name="Goodwin L."/>
            <person name="Pitluck S."/>
            <person name="Chertkov O."/>
            <person name="Meincke L."/>
            <person name="Brettin T."/>
            <person name="Detter J.C."/>
            <person name="Han C."/>
            <person name="Tapia R."/>
            <person name="Kuske C.R."/>
            <person name="Schmutz J."/>
            <person name="Larimer F."/>
            <person name="Land M."/>
            <person name="Hauser L."/>
            <person name="Kyrpides N."/>
            <person name="Mikhailova N."/>
            <person name="Sung Y."/>
            <person name="Fletcher K.E."/>
            <person name="Ritalahti K.M."/>
            <person name="Loeffler F.E."/>
            <person name="Richardson P."/>
        </authorList>
    </citation>
    <scope>NUCLEOTIDE SEQUENCE [LARGE SCALE GENOMIC DNA]</scope>
    <source>
        <strain>ATCC BAA-1151 / DSM 17278 / SZ</strain>
    </source>
</reference>
<dbReference type="EMBL" id="CP001089">
    <property type="protein sequence ID" value="ACD96478.1"/>
    <property type="molecule type" value="Genomic_DNA"/>
</dbReference>
<dbReference type="RefSeq" id="WP_012470807.1">
    <property type="nucleotide sequence ID" value="NC_010814.1"/>
</dbReference>
<dbReference type="SMR" id="B3E7G1"/>
<dbReference type="STRING" id="398767.Glov_2765"/>
<dbReference type="KEGG" id="glo:Glov_2765"/>
<dbReference type="eggNOG" id="COG0864">
    <property type="taxonomic scope" value="Bacteria"/>
</dbReference>
<dbReference type="HOGENOM" id="CLU_113319_1_2_7"/>
<dbReference type="OrthoDB" id="9806294at2"/>
<dbReference type="Proteomes" id="UP000002420">
    <property type="component" value="Chromosome"/>
</dbReference>
<dbReference type="GO" id="GO:0003677">
    <property type="term" value="F:DNA binding"/>
    <property type="evidence" value="ECO:0007669"/>
    <property type="project" value="UniProtKB-KW"/>
</dbReference>
<dbReference type="GO" id="GO:0003700">
    <property type="term" value="F:DNA-binding transcription factor activity"/>
    <property type="evidence" value="ECO:0007669"/>
    <property type="project" value="UniProtKB-UniRule"/>
</dbReference>
<dbReference type="GO" id="GO:0016151">
    <property type="term" value="F:nickel cation binding"/>
    <property type="evidence" value="ECO:0007669"/>
    <property type="project" value="UniProtKB-UniRule"/>
</dbReference>
<dbReference type="GO" id="GO:0010045">
    <property type="term" value="P:response to nickel cation"/>
    <property type="evidence" value="ECO:0007669"/>
    <property type="project" value="InterPro"/>
</dbReference>
<dbReference type="CDD" id="cd22231">
    <property type="entry name" value="RHH_NikR_HicB-like"/>
    <property type="match status" value="1"/>
</dbReference>
<dbReference type="Gene3D" id="3.30.70.1150">
    <property type="entry name" value="ACT-like. Chain A, domain 2"/>
    <property type="match status" value="1"/>
</dbReference>
<dbReference type="Gene3D" id="1.10.1220.10">
    <property type="entry name" value="Met repressor-like"/>
    <property type="match status" value="1"/>
</dbReference>
<dbReference type="HAMAP" id="MF_00476">
    <property type="entry name" value="NikR"/>
    <property type="match status" value="1"/>
</dbReference>
<dbReference type="InterPro" id="IPR027271">
    <property type="entry name" value="Acetolactate_synth/TF_NikR_C"/>
</dbReference>
<dbReference type="InterPro" id="IPR045865">
    <property type="entry name" value="ACT-like_dom_sf"/>
</dbReference>
<dbReference type="InterPro" id="IPR013321">
    <property type="entry name" value="Arc_rbn_hlx_hlx"/>
</dbReference>
<dbReference type="InterPro" id="IPR002145">
    <property type="entry name" value="CopG"/>
</dbReference>
<dbReference type="InterPro" id="IPR050192">
    <property type="entry name" value="CopG/NikR_regulator"/>
</dbReference>
<dbReference type="InterPro" id="IPR022988">
    <property type="entry name" value="Ni_resp_reg_NikR"/>
</dbReference>
<dbReference type="InterPro" id="IPR010985">
    <property type="entry name" value="Ribbon_hlx_hlx"/>
</dbReference>
<dbReference type="InterPro" id="IPR014864">
    <property type="entry name" value="TF_NikR_Ni-bd_C"/>
</dbReference>
<dbReference type="NCBIfam" id="NF001884">
    <property type="entry name" value="PRK00630.1"/>
    <property type="match status" value="1"/>
</dbReference>
<dbReference type="NCBIfam" id="NF002169">
    <property type="entry name" value="PRK01002.1"/>
    <property type="match status" value="1"/>
</dbReference>
<dbReference type="NCBIfam" id="NF002815">
    <property type="entry name" value="PRK02967.1"/>
    <property type="match status" value="1"/>
</dbReference>
<dbReference type="NCBIfam" id="NF003381">
    <property type="entry name" value="PRK04460.1"/>
    <property type="match status" value="1"/>
</dbReference>
<dbReference type="PANTHER" id="PTHR34719">
    <property type="entry name" value="NICKEL-RESPONSIVE REGULATOR"/>
    <property type="match status" value="1"/>
</dbReference>
<dbReference type="PANTHER" id="PTHR34719:SF2">
    <property type="entry name" value="NICKEL-RESPONSIVE REGULATOR"/>
    <property type="match status" value="1"/>
</dbReference>
<dbReference type="Pfam" id="PF08753">
    <property type="entry name" value="NikR_C"/>
    <property type="match status" value="1"/>
</dbReference>
<dbReference type="Pfam" id="PF01402">
    <property type="entry name" value="RHH_1"/>
    <property type="match status" value="1"/>
</dbReference>
<dbReference type="SUPFAM" id="SSF55021">
    <property type="entry name" value="ACT-like"/>
    <property type="match status" value="1"/>
</dbReference>
<dbReference type="SUPFAM" id="SSF47598">
    <property type="entry name" value="Ribbon-helix-helix"/>
    <property type="match status" value="1"/>
</dbReference>
<keyword id="KW-0238">DNA-binding</keyword>
<keyword id="KW-0479">Metal-binding</keyword>
<keyword id="KW-0533">Nickel</keyword>
<keyword id="KW-1185">Reference proteome</keyword>
<keyword id="KW-0804">Transcription</keyword>
<keyword id="KW-0805">Transcription regulation</keyword>
<gene>
    <name type="ordered locus">Glov_2765</name>
</gene>
<organism>
    <name type="scientific">Trichlorobacter lovleyi (strain ATCC BAA-1151 / DSM 17278 / SZ)</name>
    <name type="common">Geobacter lovleyi</name>
    <dbReference type="NCBI Taxonomy" id="398767"/>
    <lineage>
        <taxon>Bacteria</taxon>
        <taxon>Pseudomonadati</taxon>
        <taxon>Thermodesulfobacteriota</taxon>
        <taxon>Desulfuromonadia</taxon>
        <taxon>Geobacterales</taxon>
        <taxon>Geobacteraceae</taxon>
        <taxon>Trichlorobacter</taxon>
    </lineage>
</organism>
<evidence type="ECO:0000255" key="1">
    <source>
        <dbReference type="HAMAP-Rule" id="MF_00476"/>
    </source>
</evidence>
<name>NIKR_TRIL1</name>
<accession>B3E7G1</accession>
<comment type="function">
    <text evidence="1">Transcriptional regulator.</text>
</comment>
<comment type="cofactor">
    <cofactor evidence="1">
        <name>Ni(2+)</name>
        <dbReference type="ChEBI" id="CHEBI:49786"/>
    </cofactor>
    <text evidence="1">Binds 1 nickel ion per subunit.</text>
</comment>
<comment type="similarity">
    <text evidence="1">Belongs to the transcriptional regulatory CopG/NikR family.</text>
</comment>
<feature type="chain" id="PRO_1000125826" description="Putative nickel-responsive regulator">
    <location>
        <begin position="1"/>
        <end position="139"/>
    </location>
</feature>
<feature type="binding site" evidence="1">
    <location>
        <position position="79"/>
    </location>
    <ligand>
        <name>Ni(2+)</name>
        <dbReference type="ChEBI" id="CHEBI:49786"/>
    </ligand>
</feature>
<feature type="binding site" evidence="1">
    <location>
        <position position="90"/>
    </location>
    <ligand>
        <name>Ni(2+)</name>
        <dbReference type="ChEBI" id="CHEBI:49786"/>
    </ligand>
</feature>
<feature type="binding site" evidence="1">
    <location>
        <position position="92"/>
    </location>
    <ligand>
        <name>Ni(2+)</name>
        <dbReference type="ChEBI" id="CHEBI:49786"/>
    </ligand>
</feature>
<feature type="binding site" evidence="1">
    <location>
        <position position="98"/>
    </location>
    <ligand>
        <name>Ni(2+)</name>
        <dbReference type="ChEBI" id="CHEBI:49786"/>
    </ligand>
</feature>
<protein>
    <recommendedName>
        <fullName evidence="1">Putative nickel-responsive regulator</fullName>
    </recommendedName>
</protein>
<sequence length="139" mass="15668">MGDITRFGISIDSDLLDSFDRLITRKGYQNRSEAIRDLIRATIVEEKMDAGHEEMVGTVTMVYNHHVRDLADKLTEHQHQHHHQVISALHVHLDAHNCLEVLVLKGSSAEIKQIADELLGVKGVKHGKLFLTSATPEHH</sequence>